<organism>
    <name type="scientific">Escherichia coli O139:H28 (strain E24377A / ETEC)</name>
    <dbReference type="NCBI Taxonomy" id="331111"/>
    <lineage>
        <taxon>Bacteria</taxon>
        <taxon>Pseudomonadati</taxon>
        <taxon>Pseudomonadota</taxon>
        <taxon>Gammaproteobacteria</taxon>
        <taxon>Enterobacterales</taxon>
        <taxon>Enterobacteriaceae</taxon>
        <taxon>Escherichia</taxon>
    </lineage>
</organism>
<evidence type="ECO:0000255" key="1">
    <source>
        <dbReference type="HAMAP-Rule" id="MF_01523"/>
    </source>
</evidence>
<dbReference type="EC" id="2.1.1.242" evidence="1"/>
<dbReference type="EMBL" id="CP000800">
    <property type="protein sequence ID" value="ABV20666.1"/>
    <property type="molecule type" value="Genomic_DNA"/>
</dbReference>
<dbReference type="RefSeq" id="WP_000686608.1">
    <property type="nucleotide sequence ID" value="NC_009801.1"/>
</dbReference>
<dbReference type="SMR" id="A7ZT33"/>
<dbReference type="GeneID" id="93778496"/>
<dbReference type="KEGG" id="ecw:EcE24377A_3979"/>
<dbReference type="HOGENOM" id="CLU_076324_0_0_6"/>
<dbReference type="Proteomes" id="UP000001122">
    <property type="component" value="Chromosome"/>
</dbReference>
<dbReference type="GO" id="GO:0005737">
    <property type="term" value="C:cytoplasm"/>
    <property type="evidence" value="ECO:0007669"/>
    <property type="project" value="UniProtKB-SubCell"/>
</dbReference>
<dbReference type="GO" id="GO:0008990">
    <property type="term" value="F:rRNA (guanine-N2-)-methyltransferase activity"/>
    <property type="evidence" value="ECO:0007669"/>
    <property type="project" value="UniProtKB-UniRule"/>
</dbReference>
<dbReference type="CDD" id="cd02440">
    <property type="entry name" value="AdoMet_MTases"/>
    <property type="match status" value="1"/>
</dbReference>
<dbReference type="FunFam" id="3.40.1630.10:FF:000001">
    <property type="entry name" value="Ribosomal RNA small subunit methyltransferase J"/>
    <property type="match status" value="1"/>
</dbReference>
<dbReference type="FunFam" id="3.40.50.150:FF:000072">
    <property type="entry name" value="Ribosomal RNA small subunit methyltransferase J"/>
    <property type="match status" value="1"/>
</dbReference>
<dbReference type="Gene3D" id="3.40.50.150">
    <property type="entry name" value="Vaccinia Virus protein VP39"/>
    <property type="match status" value="1"/>
</dbReference>
<dbReference type="Gene3D" id="3.40.1630.10">
    <property type="entry name" value="YhiQ-like domain"/>
    <property type="match status" value="1"/>
</dbReference>
<dbReference type="HAMAP" id="MF_01523">
    <property type="entry name" value="16SrRNA_methyltr_J"/>
    <property type="match status" value="1"/>
</dbReference>
<dbReference type="InterPro" id="IPR007536">
    <property type="entry name" value="16SrRNA_methylTrfase_J"/>
</dbReference>
<dbReference type="InterPro" id="IPR029063">
    <property type="entry name" value="SAM-dependent_MTases_sf"/>
</dbReference>
<dbReference type="NCBIfam" id="NF008012">
    <property type="entry name" value="PRK10742.1"/>
    <property type="match status" value="1"/>
</dbReference>
<dbReference type="PANTHER" id="PTHR36112">
    <property type="entry name" value="RIBOSOMAL RNA SMALL SUBUNIT METHYLTRANSFERASE J"/>
    <property type="match status" value="1"/>
</dbReference>
<dbReference type="PANTHER" id="PTHR36112:SF1">
    <property type="entry name" value="RIBOSOMAL RNA SMALL SUBUNIT METHYLTRANSFERASE J"/>
    <property type="match status" value="1"/>
</dbReference>
<dbReference type="Pfam" id="PF04445">
    <property type="entry name" value="SAM_MT"/>
    <property type="match status" value="1"/>
</dbReference>
<dbReference type="SUPFAM" id="SSF53335">
    <property type="entry name" value="S-adenosyl-L-methionine-dependent methyltransferases"/>
    <property type="match status" value="1"/>
</dbReference>
<feature type="chain" id="PRO_0000316253" description="Ribosomal RNA small subunit methyltransferase J">
    <location>
        <begin position="1"/>
        <end position="250"/>
    </location>
</feature>
<feature type="binding site" evidence="1">
    <location>
        <begin position="101"/>
        <end position="102"/>
    </location>
    <ligand>
        <name>S-adenosyl-L-methionine</name>
        <dbReference type="ChEBI" id="CHEBI:59789"/>
    </ligand>
</feature>
<feature type="binding site" evidence="1">
    <location>
        <begin position="117"/>
        <end position="118"/>
    </location>
    <ligand>
        <name>S-adenosyl-L-methionine</name>
        <dbReference type="ChEBI" id="CHEBI:59789"/>
    </ligand>
</feature>
<feature type="binding site" evidence="1">
    <location>
        <begin position="153"/>
        <end position="154"/>
    </location>
    <ligand>
        <name>S-adenosyl-L-methionine</name>
        <dbReference type="ChEBI" id="CHEBI:59789"/>
    </ligand>
</feature>
<feature type="binding site" evidence="1">
    <location>
        <position position="171"/>
    </location>
    <ligand>
        <name>S-adenosyl-L-methionine</name>
        <dbReference type="ChEBI" id="CHEBI:59789"/>
    </ligand>
</feature>
<protein>
    <recommendedName>
        <fullName evidence="1">Ribosomal RNA small subunit methyltransferase J</fullName>
        <ecNumber evidence="1">2.1.1.242</ecNumber>
    </recommendedName>
    <alternativeName>
        <fullName evidence="1">16S rRNA m2G1516 methyltransferase</fullName>
    </alternativeName>
    <alternativeName>
        <fullName evidence="1">rRNA (guanine-N(2)-)-methyltransferase</fullName>
    </alternativeName>
</protein>
<proteinExistence type="inferred from homology"/>
<gene>
    <name evidence="1" type="primary">rsmJ</name>
    <name type="synonym">yhiQ</name>
    <name type="ordered locus">EcE24377A_3979</name>
</gene>
<sequence>MKICLIDETGAGDGALSVLAARWGLEHDEDNLMALVLTPEHLELRKRDEPKLGGIFVDFVGGAMAHRRKFGGGRGEAVAKAVGIKGDYLPDVVDATAGLGRDAFVLASVGCRVRMLERNPVVAALLDDGLARGYADAEIGGWLQERLQLIHASSLTALTDITPRPQVVYLDPMFPHKQKSALVKKEMRVFQSLVGPDLDADGLLEPARLLATKRVVVKRPDYAPPLANVATPNAVVTKGHRFDIYAGTPV</sequence>
<comment type="function">
    <text evidence="1">Specifically methylates the guanosine in position 1516 of 16S rRNA.</text>
</comment>
<comment type="catalytic activity">
    <reaction evidence="1">
        <text>guanosine(1516) in 16S rRNA + S-adenosyl-L-methionine = N(2)-methylguanosine(1516) in 16S rRNA + S-adenosyl-L-homocysteine + H(+)</text>
        <dbReference type="Rhea" id="RHEA:43220"/>
        <dbReference type="Rhea" id="RHEA-COMP:10412"/>
        <dbReference type="Rhea" id="RHEA-COMP:10413"/>
        <dbReference type="ChEBI" id="CHEBI:15378"/>
        <dbReference type="ChEBI" id="CHEBI:57856"/>
        <dbReference type="ChEBI" id="CHEBI:59789"/>
        <dbReference type="ChEBI" id="CHEBI:74269"/>
        <dbReference type="ChEBI" id="CHEBI:74481"/>
        <dbReference type="EC" id="2.1.1.242"/>
    </reaction>
</comment>
<comment type="subcellular location">
    <subcellularLocation>
        <location evidence="1">Cytoplasm</location>
    </subcellularLocation>
</comment>
<comment type="similarity">
    <text evidence="1">Belongs to the methyltransferase superfamily. RsmJ family.</text>
</comment>
<name>RSMJ_ECO24</name>
<accession>A7ZT33</accession>
<keyword id="KW-0963">Cytoplasm</keyword>
<keyword id="KW-0489">Methyltransferase</keyword>
<keyword id="KW-1185">Reference proteome</keyword>
<keyword id="KW-0698">rRNA processing</keyword>
<keyword id="KW-0949">S-adenosyl-L-methionine</keyword>
<keyword id="KW-0808">Transferase</keyword>
<reference key="1">
    <citation type="journal article" date="2008" name="J. Bacteriol.">
        <title>The pangenome structure of Escherichia coli: comparative genomic analysis of E. coli commensal and pathogenic isolates.</title>
        <authorList>
            <person name="Rasko D.A."/>
            <person name="Rosovitz M.J."/>
            <person name="Myers G.S.A."/>
            <person name="Mongodin E.F."/>
            <person name="Fricke W.F."/>
            <person name="Gajer P."/>
            <person name="Crabtree J."/>
            <person name="Sebaihia M."/>
            <person name="Thomson N.R."/>
            <person name="Chaudhuri R."/>
            <person name="Henderson I.R."/>
            <person name="Sperandio V."/>
            <person name="Ravel J."/>
        </authorList>
    </citation>
    <scope>NUCLEOTIDE SEQUENCE [LARGE SCALE GENOMIC DNA]</scope>
    <source>
        <strain>E24377A / ETEC</strain>
    </source>
</reference>